<evidence type="ECO:0000255" key="1">
    <source>
        <dbReference type="HAMAP-Rule" id="MF_00363"/>
    </source>
</evidence>
<protein>
    <recommendedName>
        <fullName evidence="1">UPF0154 protein llmg_1186</fullName>
    </recommendedName>
</protein>
<dbReference type="EMBL" id="AM406671">
    <property type="protein sequence ID" value="CAL97779.1"/>
    <property type="molecule type" value="Genomic_DNA"/>
</dbReference>
<dbReference type="RefSeq" id="WP_003130191.1">
    <property type="nucleotide sequence ID" value="NZ_WJVF01000010.1"/>
</dbReference>
<dbReference type="SMR" id="A2RKG9"/>
<dbReference type="STRING" id="416870.llmg_1186"/>
<dbReference type="KEGG" id="llm:llmg_1186"/>
<dbReference type="eggNOG" id="COG3763">
    <property type="taxonomic scope" value="Bacteria"/>
</dbReference>
<dbReference type="HOGENOM" id="CLU_180108_0_1_9"/>
<dbReference type="OrthoDB" id="1769076at2"/>
<dbReference type="PhylomeDB" id="A2RKG9"/>
<dbReference type="Proteomes" id="UP000000364">
    <property type="component" value="Chromosome"/>
</dbReference>
<dbReference type="GO" id="GO:0005886">
    <property type="term" value="C:plasma membrane"/>
    <property type="evidence" value="ECO:0007669"/>
    <property type="project" value="UniProtKB-SubCell"/>
</dbReference>
<dbReference type="HAMAP" id="MF_00363">
    <property type="entry name" value="UPF0154"/>
    <property type="match status" value="1"/>
</dbReference>
<dbReference type="InterPro" id="IPR005359">
    <property type="entry name" value="UPF0154"/>
</dbReference>
<dbReference type="Pfam" id="PF03672">
    <property type="entry name" value="UPF0154"/>
    <property type="match status" value="1"/>
</dbReference>
<name>Y1186_LACLM</name>
<feature type="chain" id="PRO_1000005630" description="UPF0154 protein llmg_1186">
    <location>
        <begin position="1"/>
        <end position="79"/>
    </location>
</feature>
<feature type="transmembrane region" description="Helical" evidence="1">
    <location>
        <begin position="4"/>
        <end position="24"/>
    </location>
</feature>
<organism>
    <name type="scientific">Lactococcus lactis subsp. cremoris (strain MG1363)</name>
    <dbReference type="NCBI Taxonomy" id="416870"/>
    <lineage>
        <taxon>Bacteria</taxon>
        <taxon>Bacillati</taxon>
        <taxon>Bacillota</taxon>
        <taxon>Bacilli</taxon>
        <taxon>Lactobacillales</taxon>
        <taxon>Streptococcaceae</taxon>
        <taxon>Lactococcus</taxon>
        <taxon>Lactococcus cremoris subsp. cremoris</taxon>
    </lineage>
</organism>
<sequence length="79" mass="8933">MNLILAILLMVVCLLAGFFLGTWFSQRQTKKLLMDNPPLNEDAVRLMMGSMGRKPSEVQVQQVLRQIRAAAKQSDTNKK</sequence>
<comment type="subcellular location">
    <subcellularLocation>
        <location evidence="1">Cell membrane</location>
        <topology evidence="1">Single-pass membrane protein</topology>
    </subcellularLocation>
</comment>
<comment type="similarity">
    <text evidence="1">Belongs to the UPF0154 family.</text>
</comment>
<proteinExistence type="inferred from homology"/>
<reference key="1">
    <citation type="journal article" date="2007" name="J. Bacteriol.">
        <title>The complete genome sequence of the lactic acid bacterial paradigm Lactococcus lactis subsp. cremoris MG1363.</title>
        <authorList>
            <person name="Wegmann U."/>
            <person name="O'Connell-Motherway M."/>
            <person name="Zomer A."/>
            <person name="Buist G."/>
            <person name="Shearman C."/>
            <person name="Canchaya C."/>
            <person name="Ventura M."/>
            <person name="Goesmann A."/>
            <person name="Gasson M.J."/>
            <person name="Kuipers O.P."/>
            <person name="van Sinderen D."/>
            <person name="Kok J."/>
        </authorList>
    </citation>
    <scope>NUCLEOTIDE SEQUENCE [LARGE SCALE GENOMIC DNA]</scope>
    <source>
        <strain>MG1363</strain>
    </source>
</reference>
<gene>
    <name type="ordered locus">llmg_1186</name>
</gene>
<keyword id="KW-1003">Cell membrane</keyword>
<keyword id="KW-0472">Membrane</keyword>
<keyword id="KW-0812">Transmembrane</keyword>
<keyword id="KW-1133">Transmembrane helix</keyword>
<accession>A2RKG9</accession>